<name>RL13_TETTS</name>
<keyword id="KW-0002">3D-structure</keyword>
<keyword id="KW-1185">Reference proteome</keyword>
<keyword id="KW-0687">Ribonucleoprotein</keyword>
<keyword id="KW-0689">Ribosomal protein</keyword>
<feature type="chain" id="PRO_0000413497" description="Large ribosomal subunit protein eL13">
    <location>
        <begin position="1"/>
        <end position="206"/>
    </location>
</feature>
<feature type="region of interest" description="Disordered" evidence="1">
    <location>
        <begin position="184"/>
        <end position="206"/>
    </location>
</feature>
<feature type="compositionally biased region" description="Basic and acidic residues" evidence="1">
    <location>
        <begin position="184"/>
        <end position="193"/>
    </location>
</feature>
<sequence>MKHNNQLPVAQLRKHQQFRIKTFFNQAAQKKARLHARRAQAAAVFPRPTEKLQPVVRKQTQRYNKSTKLGRGFTLQELKAAGISAAFAQSIGIKVDHRRKNRCQESLELNKKRLLAYVSKLVLFPRHQGKAKKGLVNDTADTSSAAQNALQTSVPLPSVSKREKAVSNIAELRKKKVYRIIRQEKTNQKWDGKRKAKAQAAAEPKA</sequence>
<proteinExistence type="evidence at protein level"/>
<accession>P0DJ58</accession>
<organism>
    <name type="scientific">Tetrahymena thermophila (strain SB210)</name>
    <dbReference type="NCBI Taxonomy" id="312017"/>
    <lineage>
        <taxon>Eukaryota</taxon>
        <taxon>Sar</taxon>
        <taxon>Alveolata</taxon>
        <taxon>Ciliophora</taxon>
        <taxon>Intramacronucleata</taxon>
        <taxon>Oligohymenophorea</taxon>
        <taxon>Hymenostomatida</taxon>
        <taxon>Tetrahymenina</taxon>
        <taxon>Tetrahymenidae</taxon>
        <taxon>Tetrahymena</taxon>
    </lineage>
</organism>
<reference key="1">
    <citation type="journal article" date="2006" name="PLoS Biol.">
        <title>Macronuclear genome sequence of the ciliate Tetrahymena thermophila, a model eukaryote.</title>
        <authorList>
            <person name="Eisen J.A."/>
            <person name="Coyne R.S."/>
            <person name="Wu M."/>
            <person name="Wu D."/>
            <person name="Thiagarajan M."/>
            <person name="Wortman J.R."/>
            <person name="Badger J.H."/>
            <person name="Ren Q."/>
            <person name="Amedeo P."/>
            <person name="Jones K.M."/>
            <person name="Tallon L.J."/>
            <person name="Delcher A.L."/>
            <person name="Salzberg S.L."/>
            <person name="Silva J.C."/>
            <person name="Haas B.J."/>
            <person name="Majoros W.H."/>
            <person name="Farzad M."/>
            <person name="Carlton J.M."/>
            <person name="Smith R.K. Jr."/>
            <person name="Garg J."/>
            <person name="Pearlman R.E."/>
            <person name="Karrer K.M."/>
            <person name="Sun L."/>
            <person name="Manning G."/>
            <person name="Elde N.C."/>
            <person name="Turkewitz A.P."/>
            <person name="Asai D.J."/>
            <person name="Wilkes D.E."/>
            <person name="Wang Y."/>
            <person name="Cai H."/>
            <person name="Collins K."/>
            <person name="Stewart B.A."/>
            <person name="Lee S.R."/>
            <person name="Wilamowska K."/>
            <person name="Weinberg Z."/>
            <person name="Ruzzo W.L."/>
            <person name="Wloga D."/>
            <person name="Gaertig J."/>
            <person name="Frankel J."/>
            <person name="Tsao C.-C."/>
            <person name="Gorovsky M.A."/>
            <person name="Keeling P.J."/>
            <person name="Waller R.F."/>
            <person name="Patron N.J."/>
            <person name="Cherry J.M."/>
            <person name="Stover N.A."/>
            <person name="Krieger C.J."/>
            <person name="del Toro C."/>
            <person name="Ryder H.F."/>
            <person name="Williamson S.C."/>
            <person name="Barbeau R.A."/>
            <person name="Hamilton E.P."/>
            <person name="Orias E."/>
        </authorList>
    </citation>
    <scope>NUCLEOTIDE SEQUENCE [LARGE SCALE GENOMIC DNA]</scope>
    <source>
        <strain>SB210</strain>
    </source>
</reference>
<gene>
    <name type="primary">RPL13</name>
    <name type="ORF">TTHERM_00578640A</name>
</gene>
<evidence type="ECO:0000256" key="1">
    <source>
        <dbReference type="SAM" id="MobiDB-lite"/>
    </source>
</evidence>
<evidence type="ECO:0000305" key="2"/>
<protein>
    <recommendedName>
        <fullName evidence="2">Large ribosomal subunit protein eL13</fullName>
    </recommendedName>
    <alternativeName>
        <fullName>60S ribosomal protein L13</fullName>
    </alternativeName>
</protein>
<dbReference type="EMBL" id="GG662527">
    <property type="protein sequence ID" value="EAS02620.1"/>
    <property type="molecule type" value="Genomic_DNA"/>
</dbReference>
<dbReference type="RefSeq" id="XP_001022864.1">
    <property type="nucleotide sequence ID" value="XM_001022864.1"/>
</dbReference>
<dbReference type="PDB" id="4V8P">
    <property type="method" value="X-ray"/>
    <property type="resolution" value="3.52 A"/>
    <property type="chains" value="AU/DU/FU/HU=1-206"/>
</dbReference>
<dbReference type="PDBsum" id="4V8P"/>
<dbReference type="SMR" id="P0DJ58"/>
<dbReference type="FunCoup" id="P0DJ58">
    <property type="interactions" value="479"/>
</dbReference>
<dbReference type="IntAct" id="P0DJ58">
    <property type="interactions" value="1"/>
</dbReference>
<dbReference type="STRING" id="312017.P0DJ58"/>
<dbReference type="EnsemblProtists" id="EAS02620">
    <property type="protein sequence ID" value="EAS02620"/>
    <property type="gene ID" value="TTHERM_00578640"/>
</dbReference>
<dbReference type="KEGG" id="tet:TTHERM_00578640"/>
<dbReference type="eggNOG" id="KOG3295">
    <property type="taxonomic scope" value="Eukaryota"/>
</dbReference>
<dbReference type="HOGENOM" id="CLU_075696_1_0_1"/>
<dbReference type="InParanoid" id="P0DJ58"/>
<dbReference type="OMA" id="HWHKRIK"/>
<dbReference type="OrthoDB" id="311186at2759"/>
<dbReference type="Proteomes" id="UP000009168">
    <property type="component" value="Unassembled WGS sequence"/>
</dbReference>
<dbReference type="GO" id="GO:0022625">
    <property type="term" value="C:cytosolic large ribosomal subunit"/>
    <property type="evidence" value="ECO:0007669"/>
    <property type="project" value="TreeGrafter"/>
</dbReference>
<dbReference type="GO" id="GO:0003723">
    <property type="term" value="F:RNA binding"/>
    <property type="evidence" value="ECO:0007669"/>
    <property type="project" value="TreeGrafter"/>
</dbReference>
<dbReference type="GO" id="GO:0003735">
    <property type="term" value="F:structural constituent of ribosome"/>
    <property type="evidence" value="ECO:0007669"/>
    <property type="project" value="InterPro"/>
</dbReference>
<dbReference type="GO" id="GO:0006412">
    <property type="term" value="P:translation"/>
    <property type="evidence" value="ECO:0007669"/>
    <property type="project" value="InterPro"/>
</dbReference>
<dbReference type="Gene3D" id="6.10.250.1230">
    <property type="match status" value="1"/>
</dbReference>
<dbReference type="HAMAP" id="MF_00499">
    <property type="entry name" value="Ribosomal_eL13"/>
    <property type="match status" value="1"/>
</dbReference>
<dbReference type="InterPro" id="IPR001380">
    <property type="entry name" value="Ribosomal_eL13"/>
</dbReference>
<dbReference type="InterPro" id="IPR018256">
    <property type="entry name" value="Ribosomal_eL13_CS"/>
</dbReference>
<dbReference type="PANTHER" id="PTHR11722">
    <property type="entry name" value="60S RIBOSOMAL PROTEIN L13"/>
    <property type="match status" value="1"/>
</dbReference>
<dbReference type="PANTHER" id="PTHR11722:SF0">
    <property type="entry name" value="LARGE RIBOSOMAL SUBUNIT PROTEIN EL13"/>
    <property type="match status" value="1"/>
</dbReference>
<dbReference type="Pfam" id="PF01294">
    <property type="entry name" value="Ribosomal_L13e"/>
    <property type="match status" value="1"/>
</dbReference>
<dbReference type="PROSITE" id="PS01104">
    <property type="entry name" value="RIBOSOMAL_L13E"/>
    <property type="match status" value="1"/>
</dbReference>
<comment type="similarity">
    <text evidence="2">Belongs to the eukaryotic ribosomal protein eL13 family.</text>
</comment>